<feature type="chain" id="PRO_1000131416" description="Phosphatidylserine decarboxylase beta chain" evidence="1">
    <location>
        <begin position="1"/>
        <end position="246"/>
    </location>
</feature>
<feature type="chain" id="PRO_1000131417" description="Phosphatidylserine decarboxylase alpha chain" evidence="1">
    <location>
        <begin position="247"/>
        <end position="282"/>
    </location>
</feature>
<feature type="active site" description="Charge relay system; for autoendoproteolytic cleavage activity" evidence="1">
    <location>
        <position position="88"/>
    </location>
</feature>
<feature type="active site" description="Charge relay system; for autoendoproteolytic cleavage activity" evidence="1">
    <location>
        <position position="144"/>
    </location>
</feature>
<feature type="active site" description="Charge relay system; for autoendoproteolytic cleavage activity" evidence="1">
    <location>
        <position position="247"/>
    </location>
</feature>
<feature type="active site" description="Schiff-base intermediate with substrate; via pyruvic acid; for decarboxylase activity" evidence="1">
    <location>
        <position position="247"/>
    </location>
</feature>
<feature type="site" description="Cleavage (non-hydrolytic); by autocatalysis" evidence="1">
    <location>
        <begin position="246"/>
        <end position="247"/>
    </location>
</feature>
<feature type="modified residue" description="Pyruvic acid (Ser); by autocatalysis" evidence="1">
    <location>
        <position position="247"/>
    </location>
</feature>
<comment type="function">
    <text evidence="1">Catalyzes the formation of phosphatidylethanolamine (PtdEtn) from phosphatidylserine (PtdSer).</text>
</comment>
<comment type="catalytic activity">
    <reaction evidence="1">
        <text>a 1,2-diacyl-sn-glycero-3-phospho-L-serine + H(+) = a 1,2-diacyl-sn-glycero-3-phosphoethanolamine + CO2</text>
        <dbReference type="Rhea" id="RHEA:20828"/>
        <dbReference type="ChEBI" id="CHEBI:15378"/>
        <dbReference type="ChEBI" id="CHEBI:16526"/>
        <dbReference type="ChEBI" id="CHEBI:57262"/>
        <dbReference type="ChEBI" id="CHEBI:64612"/>
        <dbReference type="EC" id="4.1.1.65"/>
    </reaction>
</comment>
<comment type="cofactor">
    <cofactor evidence="1">
        <name>pyruvate</name>
        <dbReference type="ChEBI" id="CHEBI:15361"/>
    </cofactor>
    <text evidence="1">Binds 1 pyruvoyl group covalently per subunit.</text>
</comment>
<comment type="pathway">
    <text evidence="1">Phospholipid metabolism; phosphatidylethanolamine biosynthesis; phosphatidylethanolamine from CDP-diacylglycerol: step 2/2.</text>
</comment>
<comment type="subunit">
    <text evidence="1">Heterodimer of a large membrane-associated beta subunit and a small pyruvoyl-containing alpha subunit.</text>
</comment>
<comment type="subcellular location">
    <subcellularLocation>
        <location evidence="1">Cell membrane</location>
        <topology evidence="1">Peripheral membrane protein</topology>
    </subcellularLocation>
</comment>
<comment type="PTM">
    <text evidence="1">Is synthesized initially as an inactive proenzyme. Formation of the active enzyme involves a self-maturation process in which the active site pyruvoyl group is generated from an internal serine residue via an autocatalytic post-translational modification. Two non-identical subunits are generated from the proenzyme in this reaction, and the pyruvate is formed at the N-terminus of the alpha chain, which is derived from the carboxyl end of the proenzyme. The autoendoproteolytic cleavage occurs by a canonical serine protease mechanism, in which the side chain hydroxyl group of the serine supplies its oxygen atom to form the C-terminus of the beta chain, while the remainder of the serine residue undergoes an oxidative deamination to produce ammonia and the pyruvoyl prosthetic group on the alpha chain. During this reaction, the Ser that is part of the protease active site of the proenzyme becomes the pyruvoyl prosthetic group, which constitutes an essential element of the active site of the mature decarboxylase.</text>
</comment>
<comment type="similarity">
    <text evidence="1">Belongs to the phosphatidylserine decarboxylase family. PSD-B subfamily. Prokaryotic type I sub-subfamily.</text>
</comment>
<accession>B0RR72</accession>
<name>PSD_XANCB</name>
<reference key="1">
    <citation type="journal article" date="2008" name="J. Biotechnol.">
        <title>The genome of Xanthomonas campestris pv. campestris B100 and its use for the reconstruction of metabolic pathways involved in xanthan biosynthesis.</title>
        <authorList>
            <person name="Vorhoelter F.-J."/>
            <person name="Schneiker S."/>
            <person name="Goesmann A."/>
            <person name="Krause L."/>
            <person name="Bekel T."/>
            <person name="Kaiser O."/>
            <person name="Linke B."/>
            <person name="Patschkowski T."/>
            <person name="Rueckert C."/>
            <person name="Schmid J."/>
            <person name="Sidhu V.K."/>
            <person name="Sieber V."/>
            <person name="Tauch A."/>
            <person name="Watt S.A."/>
            <person name="Weisshaar B."/>
            <person name="Becker A."/>
            <person name="Niehaus K."/>
            <person name="Puehler A."/>
        </authorList>
    </citation>
    <scope>NUCLEOTIDE SEQUENCE [LARGE SCALE GENOMIC DNA]</scope>
    <source>
        <strain>B100</strain>
    </source>
</reference>
<protein>
    <recommendedName>
        <fullName evidence="1">Phosphatidylserine decarboxylase proenzyme</fullName>
        <ecNumber evidence="1">4.1.1.65</ecNumber>
    </recommendedName>
    <component>
        <recommendedName>
            <fullName evidence="1">Phosphatidylserine decarboxylase alpha chain</fullName>
        </recommendedName>
    </component>
    <component>
        <recommendedName>
            <fullName evidence="1">Phosphatidylserine decarboxylase beta chain</fullName>
        </recommendedName>
    </component>
</protein>
<proteinExistence type="inferred from homology"/>
<evidence type="ECO:0000255" key="1">
    <source>
        <dbReference type="HAMAP-Rule" id="MF_00662"/>
    </source>
</evidence>
<keyword id="KW-1003">Cell membrane</keyword>
<keyword id="KW-0210">Decarboxylase</keyword>
<keyword id="KW-0444">Lipid biosynthesis</keyword>
<keyword id="KW-0443">Lipid metabolism</keyword>
<keyword id="KW-0456">Lyase</keyword>
<keyword id="KW-0472">Membrane</keyword>
<keyword id="KW-0594">Phospholipid biosynthesis</keyword>
<keyword id="KW-1208">Phospholipid metabolism</keyword>
<keyword id="KW-0670">Pyruvate</keyword>
<keyword id="KW-0865">Zymogen</keyword>
<sequence length="282" mass="30864">MSLVTSLTYVLPHRLLSSLARALAYSKTPATKQWLIDTVTRKFGVDLSEAQEPDPRVYPTFNAFFTRALKPGARVPDADPQALLMPADGRISQLGPIENGRIFQAKGQSFTAAELLGDESAAVPFHNGLFATVYLSPKDYHRVHMPWSGTLRETVHVPGRLFSVGPDAVRNVPRLFARNERLVCHFDTDFGPMASVMVGALLVSGVETVWSGVEIPRYGDRITRKDYRGKGITLERFAEMARFNYGSTVIVLLPPGVAALEGGLAAESSVRLGQALARRQVA</sequence>
<gene>
    <name evidence="1" type="primary">psd</name>
    <name type="ordered locus">xcc-b100_1607</name>
</gene>
<dbReference type="EC" id="4.1.1.65" evidence="1"/>
<dbReference type="EMBL" id="AM920689">
    <property type="protein sequence ID" value="CAP50957.1"/>
    <property type="molecule type" value="Genomic_DNA"/>
</dbReference>
<dbReference type="SMR" id="B0RR72"/>
<dbReference type="KEGG" id="xca:xcc-b100_1607"/>
<dbReference type="HOGENOM" id="CLU_029061_4_1_6"/>
<dbReference type="UniPathway" id="UPA00558">
    <property type="reaction ID" value="UER00616"/>
</dbReference>
<dbReference type="Proteomes" id="UP000001188">
    <property type="component" value="Chromosome"/>
</dbReference>
<dbReference type="GO" id="GO:0005886">
    <property type="term" value="C:plasma membrane"/>
    <property type="evidence" value="ECO:0007669"/>
    <property type="project" value="UniProtKB-SubCell"/>
</dbReference>
<dbReference type="GO" id="GO:0004609">
    <property type="term" value="F:phosphatidylserine decarboxylase activity"/>
    <property type="evidence" value="ECO:0007669"/>
    <property type="project" value="UniProtKB-UniRule"/>
</dbReference>
<dbReference type="GO" id="GO:0006646">
    <property type="term" value="P:phosphatidylethanolamine biosynthetic process"/>
    <property type="evidence" value="ECO:0007669"/>
    <property type="project" value="UniProtKB-UniRule"/>
</dbReference>
<dbReference type="HAMAP" id="MF_00662">
    <property type="entry name" value="PS_decarb_PSD_B_type1"/>
    <property type="match status" value="1"/>
</dbReference>
<dbReference type="InterPro" id="IPR003817">
    <property type="entry name" value="PS_Dcarbxylase"/>
</dbReference>
<dbReference type="InterPro" id="IPR033177">
    <property type="entry name" value="PSD-B"/>
</dbReference>
<dbReference type="InterPro" id="IPR033178">
    <property type="entry name" value="PSD_type1_pro"/>
</dbReference>
<dbReference type="NCBIfam" id="TIGR00163">
    <property type="entry name" value="PS_decarb"/>
    <property type="match status" value="1"/>
</dbReference>
<dbReference type="PANTHER" id="PTHR10067">
    <property type="entry name" value="PHOSPHATIDYLSERINE DECARBOXYLASE"/>
    <property type="match status" value="1"/>
</dbReference>
<dbReference type="PANTHER" id="PTHR10067:SF6">
    <property type="entry name" value="PHOSPHATIDYLSERINE DECARBOXYLASE PROENZYME, MITOCHONDRIAL"/>
    <property type="match status" value="1"/>
</dbReference>
<dbReference type="Pfam" id="PF02666">
    <property type="entry name" value="PS_Dcarbxylase"/>
    <property type="match status" value="1"/>
</dbReference>
<organism>
    <name type="scientific">Xanthomonas campestris pv. campestris (strain B100)</name>
    <dbReference type="NCBI Taxonomy" id="509169"/>
    <lineage>
        <taxon>Bacteria</taxon>
        <taxon>Pseudomonadati</taxon>
        <taxon>Pseudomonadota</taxon>
        <taxon>Gammaproteobacteria</taxon>
        <taxon>Lysobacterales</taxon>
        <taxon>Lysobacteraceae</taxon>
        <taxon>Xanthomonas</taxon>
    </lineage>
</organism>